<name>MZM1_PHANO</name>
<feature type="transit peptide" description="Mitochondrion" evidence="2">
    <location>
        <begin position="1"/>
        <end position="20"/>
    </location>
</feature>
<feature type="chain" id="PRO_0000405507" description="Mitochondrial zinc maintenance protein 1, mitochondrial">
    <location>
        <begin position="21"/>
        <end position="115"/>
    </location>
</feature>
<feature type="region of interest" description="Disordered" evidence="3">
    <location>
        <begin position="90"/>
        <end position="115"/>
    </location>
</feature>
<feature type="compositionally biased region" description="Basic and acidic residues" evidence="3">
    <location>
        <begin position="90"/>
        <end position="100"/>
    </location>
</feature>
<organism>
    <name type="scientific">Phaeosphaeria nodorum (strain SN15 / ATCC MYA-4574 / FGSC 10173)</name>
    <name type="common">Glume blotch fungus</name>
    <name type="synonym">Parastagonospora nodorum</name>
    <dbReference type="NCBI Taxonomy" id="321614"/>
    <lineage>
        <taxon>Eukaryota</taxon>
        <taxon>Fungi</taxon>
        <taxon>Dikarya</taxon>
        <taxon>Ascomycota</taxon>
        <taxon>Pezizomycotina</taxon>
        <taxon>Dothideomycetes</taxon>
        <taxon>Pleosporomycetidae</taxon>
        <taxon>Pleosporales</taxon>
        <taxon>Pleosporineae</taxon>
        <taxon>Phaeosphaeriaceae</taxon>
        <taxon>Parastagonospora</taxon>
    </lineage>
</organism>
<reference key="1">
    <citation type="journal article" date="2007" name="Plant Cell">
        <title>Dothideomycete-plant interactions illuminated by genome sequencing and EST analysis of the wheat pathogen Stagonospora nodorum.</title>
        <authorList>
            <person name="Hane J.K."/>
            <person name="Lowe R.G.T."/>
            <person name="Solomon P.S."/>
            <person name="Tan K.-C."/>
            <person name="Schoch C.L."/>
            <person name="Spatafora J.W."/>
            <person name="Crous P.W."/>
            <person name="Kodira C.D."/>
            <person name="Birren B.W."/>
            <person name="Galagan J.E."/>
            <person name="Torriani S.F.F."/>
            <person name="McDonald B.A."/>
            <person name="Oliver R.P."/>
        </authorList>
    </citation>
    <scope>NUCLEOTIDE SEQUENCE [LARGE SCALE GENOMIC DNA]</scope>
    <source>
        <strain>SN15 / ATCC MYA-4574 / FGSC 10173</strain>
    </source>
</reference>
<evidence type="ECO:0000250" key="1"/>
<evidence type="ECO:0000255" key="2"/>
<evidence type="ECO:0000256" key="3">
    <source>
        <dbReference type="SAM" id="MobiDB-lite"/>
    </source>
</evidence>
<evidence type="ECO:0000305" key="4"/>
<keyword id="KW-0143">Chaperone</keyword>
<keyword id="KW-0496">Mitochondrion</keyword>
<keyword id="KW-0809">Transit peptide</keyword>
<comment type="function">
    <text evidence="1">Assembly factor required for Rieske Fe-S protein RIP1 incorporation into the cytochrome b-c1 (CIII) complex. Functions as a chaperone, binding to this subunit within the mitochondrial matrix and stabilizing it prior to its translocation and insertion into the late CIII dimeric intermediate within the mitochondrial inner membrane. Modulates the mitochondrial matrix zinc pool (By similarity).</text>
</comment>
<comment type="subunit">
    <text evidence="1">Interacts with RIP1.</text>
</comment>
<comment type="subcellular location">
    <subcellularLocation>
        <location evidence="1">Mitochondrion matrix</location>
    </subcellularLocation>
</comment>
<comment type="similarity">
    <text evidence="4">Belongs to the complex I LYR family. MZM1 subfamily.</text>
</comment>
<sequence length="115" mass="12916">MSREMALVAYRNLLRSARVAFQGDMNTLFAARAEVRRNFESNRSLTAGSDELSKQLTHAEEVAKFLRENVVQGQAADDEGSYKLRIHEHTERGNNEDIRKGKGKSTLGRVKCCSS</sequence>
<proteinExistence type="inferred from homology"/>
<gene>
    <name type="primary">MZM1</name>
    <name type="ORF">SNOG_08445</name>
</gene>
<accession>Q0UIG9</accession>
<protein>
    <recommendedName>
        <fullName>Mitochondrial zinc maintenance protein 1, mitochondrial</fullName>
    </recommendedName>
</protein>
<dbReference type="EMBL" id="CH445336">
    <property type="protein sequence ID" value="EAT84721.2"/>
    <property type="molecule type" value="Genomic_DNA"/>
</dbReference>
<dbReference type="RefSeq" id="XP_001798756.1">
    <property type="nucleotide sequence ID" value="XM_001798704.1"/>
</dbReference>
<dbReference type="SMR" id="Q0UIG9"/>
<dbReference type="FunCoup" id="Q0UIG9">
    <property type="interactions" value="10"/>
</dbReference>
<dbReference type="STRING" id="321614.Q0UIG9"/>
<dbReference type="EnsemblFungi" id="SNOT_08445">
    <property type="protein sequence ID" value="SNOT_08445"/>
    <property type="gene ID" value="SNOG_08445"/>
</dbReference>
<dbReference type="GeneID" id="5975654"/>
<dbReference type="KEGG" id="pno:SNOG_08445"/>
<dbReference type="VEuPathDB" id="FungiDB:JI435_084450"/>
<dbReference type="eggNOG" id="ENOG502S6EF">
    <property type="taxonomic scope" value="Eukaryota"/>
</dbReference>
<dbReference type="HOGENOM" id="CLU_147114_2_2_1"/>
<dbReference type="InParanoid" id="Q0UIG9"/>
<dbReference type="Proteomes" id="UP000001055">
    <property type="component" value="Unassembled WGS sequence"/>
</dbReference>
<dbReference type="GO" id="GO:0005759">
    <property type="term" value="C:mitochondrial matrix"/>
    <property type="evidence" value="ECO:0000318"/>
    <property type="project" value="GO_Central"/>
</dbReference>
<dbReference type="GO" id="GO:0044183">
    <property type="term" value="F:protein folding chaperone"/>
    <property type="evidence" value="ECO:0000318"/>
    <property type="project" value="GO_Central"/>
</dbReference>
<dbReference type="GO" id="GO:0034551">
    <property type="term" value="P:mitochondrial respiratory chain complex III assembly"/>
    <property type="evidence" value="ECO:0000318"/>
    <property type="project" value="GO_Central"/>
</dbReference>
<dbReference type="CDD" id="cd20267">
    <property type="entry name" value="Complex1_LYR_LYRM7"/>
    <property type="match status" value="1"/>
</dbReference>
<dbReference type="InterPro" id="IPR045298">
    <property type="entry name" value="Complex1_LYR_LYRM7"/>
</dbReference>
<dbReference type="InterPro" id="IPR050435">
    <property type="entry name" value="MZM1/LYRM7"/>
</dbReference>
<dbReference type="PANTHER" id="PTHR46749">
    <property type="entry name" value="COMPLEX III ASSEMBLY FACTOR LYRM7"/>
    <property type="match status" value="1"/>
</dbReference>
<dbReference type="PANTHER" id="PTHR46749:SF1">
    <property type="entry name" value="COMPLEX III ASSEMBLY FACTOR LYRM7"/>
    <property type="match status" value="1"/>
</dbReference>